<feature type="chain" id="PRO_0000154962" description="ATP-sensitive inward rectifier potassium channel 12">
    <location>
        <begin position="1"/>
        <end position="433"/>
    </location>
</feature>
<feature type="topological domain" description="Cytoplasmic" evidence="2">
    <location>
        <begin position="1"/>
        <end position="77"/>
    </location>
</feature>
<feature type="transmembrane region" description="Helical; Name=M1" evidence="2">
    <location>
        <begin position="78"/>
        <end position="104"/>
    </location>
</feature>
<feature type="topological domain" description="Extracellular" evidence="2">
    <location>
        <begin position="105"/>
        <end position="129"/>
    </location>
</feature>
<feature type="intramembrane region" description="Helical; Pore-forming; Name=H5" evidence="2">
    <location>
        <begin position="130"/>
        <end position="146"/>
    </location>
</feature>
<feature type="topological domain" description="Extracellular" evidence="2">
    <location>
        <begin position="147"/>
        <end position="155"/>
    </location>
</feature>
<feature type="transmembrane region" description="Helical; Name=M2" evidence="2">
    <location>
        <begin position="156"/>
        <end position="183"/>
    </location>
</feature>
<feature type="topological domain" description="Cytoplasmic" evidence="2">
    <location>
        <begin position="184"/>
        <end position="433"/>
    </location>
</feature>
<feature type="region of interest" description="Disordered" evidence="6">
    <location>
        <begin position="387"/>
        <end position="433"/>
    </location>
</feature>
<feature type="short sequence motif" description="Selectivity filter" evidence="2">
    <location>
        <begin position="143"/>
        <end position="148"/>
    </location>
</feature>
<feature type="short sequence motif" description="PDZ-binding" evidence="5">
    <location>
        <begin position="431"/>
        <end position="433"/>
    </location>
</feature>
<feature type="compositionally biased region" description="Basic and acidic residues" evidence="6">
    <location>
        <begin position="396"/>
        <end position="414"/>
    </location>
</feature>
<feature type="binding site" evidence="2">
    <location>
        <position position="79"/>
    </location>
    <ligand>
        <name>a 1,2-diacyl-sn-glycero-3-phospho-(1D-myo-inositol-4,5-bisphosphate)</name>
        <dbReference type="ChEBI" id="CHEBI:58456"/>
        <note>agonist</note>
    </ligand>
</feature>
<feature type="binding site" evidence="2">
    <location>
        <position position="81"/>
    </location>
    <ligand>
        <name>a 1,2-diacyl-sn-glycero-3-phospho-(1D-myo-inositol-4,5-bisphosphate)</name>
        <dbReference type="ChEBI" id="CHEBI:58456"/>
        <note>agonist</note>
    </ligand>
</feature>
<feature type="binding site" evidence="2">
    <location>
        <position position="143"/>
    </location>
    <ligand>
        <name>K(+)</name>
        <dbReference type="ChEBI" id="CHEBI:29103"/>
        <label>1</label>
        <note>ligand likely shared between the subunits of the homotetramer</note>
    </ligand>
</feature>
<feature type="binding site" evidence="2">
    <location>
        <position position="143"/>
    </location>
    <ligand>
        <name>K(+)</name>
        <dbReference type="ChEBI" id="CHEBI:29103"/>
        <label>2</label>
        <note>ligand likely shared between the subunits of the homotetramer</note>
    </ligand>
</feature>
<feature type="binding site" evidence="2">
    <location>
        <position position="144"/>
    </location>
    <ligand>
        <name>K(+)</name>
        <dbReference type="ChEBI" id="CHEBI:29103"/>
        <label>2</label>
        <note>ligand likely shared between the subunits of the homotetramer</note>
    </ligand>
</feature>
<feature type="binding site" evidence="2">
    <location>
        <position position="144"/>
    </location>
    <ligand>
        <name>K(+)</name>
        <dbReference type="ChEBI" id="CHEBI:29103"/>
        <label>3</label>
        <note>ligand likely shared between the subunits of the homotetramer</note>
    </ligand>
</feature>
<feature type="binding site" evidence="2">
    <location>
        <position position="145"/>
    </location>
    <ligand>
        <name>K(+)</name>
        <dbReference type="ChEBI" id="CHEBI:29103"/>
        <label>3</label>
        <note>ligand likely shared between the subunits of the homotetramer</note>
    </ligand>
</feature>
<feature type="binding site" evidence="2">
    <location>
        <position position="145"/>
    </location>
    <ligand>
        <name>K(+)</name>
        <dbReference type="ChEBI" id="CHEBI:29103"/>
        <label>4</label>
        <note>ligand likely shared between the subunits of the homotetramer</note>
    </ligand>
</feature>
<feature type="binding site" evidence="2">
    <location>
        <position position="146"/>
    </location>
    <ligand>
        <name>K(+)</name>
        <dbReference type="ChEBI" id="CHEBI:29103"/>
        <label>4</label>
        <note>ligand likely shared between the subunits of the homotetramer</note>
    </ligand>
</feature>
<feature type="binding site" evidence="2">
    <location>
        <position position="183"/>
    </location>
    <ligand>
        <name>a 1,2-diacyl-sn-glycero-3-phospho-(1D-myo-inositol-4,5-bisphosphate)</name>
        <dbReference type="ChEBI" id="CHEBI:58456"/>
        <note>agonist</note>
    </ligand>
</feature>
<feature type="binding site" evidence="2">
    <location>
        <position position="188"/>
    </location>
    <ligand>
        <name>a 1,2-diacyl-sn-glycero-3-phospho-(1D-myo-inositol-4,5-bisphosphate)</name>
        <dbReference type="ChEBI" id="CHEBI:58456"/>
        <note>agonist</note>
    </ligand>
</feature>
<feature type="site" description="Role in the control of polyamine-mediated channel gating and in the blocking by intracellular magnesium" evidence="1">
    <location>
        <position position="173"/>
    </location>
</feature>
<feature type="modified residue" description="S-nitrosocysteine" evidence="4">
    <location>
        <position position="75"/>
    </location>
</feature>
<feature type="disulfide bond" evidence="2">
    <location>
        <begin position="123"/>
        <end position="155"/>
    </location>
</feature>
<feature type="sequence variant" id="VAR_024509" description="In dbSNP:rs3752032.">
    <original>R</original>
    <variation>Q</variation>
    <location>
        <position position="6"/>
    </location>
</feature>
<feature type="sequence variant" id="VAR_049671" description="In dbSNP:rs1657738.">
    <original>S</original>
    <variation>L</variation>
    <location>
        <position position="15"/>
    </location>
</feature>
<feature type="sequence variant" id="VAR_059365" description="In dbSNP:rs8076599." evidence="12">
    <original>I</original>
    <variation>V</variation>
    <location>
        <position position="100"/>
    </location>
</feature>
<feature type="sequence variant" id="VAR_059366" description="In dbSNP:rs1657740.">
    <original>R</original>
    <variation>Q</variation>
    <location>
        <position position="118"/>
    </location>
</feature>
<feature type="sequence variant" id="VAR_049672" description="Results in decreased expression at the cell membrane; dbSNP:rs1714864." evidence="10">
    <original>P</original>
    <variation>L</variation>
    <location>
        <position position="156"/>
    </location>
</feature>
<feature type="sequence variant" id="VAR_059367" description="In dbSNP:rs1657742.">
    <original>Q</original>
    <variation>H</variation>
    <location>
        <position position="192"/>
    </location>
</feature>
<feature type="sequence variant" id="VAR_049673" description="In dbSNP:rs4985866.">
    <original>I</original>
    <variation>V</variation>
    <location>
        <position position="249"/>
    </location>
</feature>
<feature type="sequence variant" id="VAR_059368" description="In dbSNP:rs5021699.">
    <original>E</original>
    <variation>G</variation>
    <location>
        <position position="430"/>
    </location>
</feature>
<feature type="sequence conflict" description="In Ref. 2; AAC50615." evidence="14" ref="2">
    <original>R</original>
    <variation>H</variation>
    <location>
        <position position="43"/>
    </location>
</feature>
<feature type="sequence conflict" description="In Ref. 2; AAC50615." evidence="14" ref="2">
    <original>M</original>
    <variation>I</variation>
    <location>
        <position position="71"/>
    </location>
</feature>
<feature type="sequence conflict" description="In Ref. 2; AAC50615." evidence="14" ref="2">
    <original>E</original>
    <variation>K</variation>
    <location>
        <position position="139"/>
    </location>
</feature>
<feature type="sequence conflict" description="In Ref. 2; AAC50615." evidence="14" ref="2">
    <original>T</original>
    <variation>N</variation>
    <location>
        <position position="142"/>
    </location>
</feature>
<feature type="sequence conflict" description="In Ref. 2; AAC50615." evidence="14" ref="2">
    <original>G</original>
    <variation>S</variation>
    <location>
        <position position="145"/>
    </location>
</feature>
<feature type="sequence conflict" description="In Ref. 2; AAC50615." evidence="14" ref="2">
    <original>D</original>
    <variation>N</variation>
    <location>
        <position position="173"/>
    </location>
</feature>
<feature type="sequence conflict" description="In Ref. 5; AAC01951." evidence="14" ref="5">
    <original>M</original>
    <variation>V</variation>
    <location>
        <position position="184"/>
    </location>
</feature>
<feature type="sequence conflict" description="In Ref. 2; AAC50615." evidence="14" ref="2">
    <original>A</original>
    <variation>V</variation>
    <location>
        <position position="185"/>
    </location>
</feature>
<feature type="sequence conflict" description="In Ref. 2; AAC50615." evidence="14" ref="2">
    <original>L</original>
    <variation>F</variation>
    <location>
        <position position="211"/>
    </location>
</feature>
<feature type="sequence conflict" description="In Ref. 2; AAC50615." evidence="14" ref="2">
    <original>E</original>
    <variation>K</variation>
    <location>
        <position position="239"/>
    </location>
</feature>
<feature type="sequence conflict" description="In Ref. 2; AAC50615." evidence="14" ref="2">
    <original>RI</original>
    <variation>HS</variation>
    <location>
        <begin position="261"/>
        <end position="262"/>
    </location>
</feature>
<feature type="sequence conflict" description="In Ref. 1; AAA65122." evidence="14" ref="1">
    <location>
        <position position="285"/>
    </location>
</feature>
<feature type="sequence conflict" description="In Ref. 2; AAC50615." evidence="14" ref="2">
    <original>ET</original>
    <variation>QM</variation>
    <location>
        <begin position="289"/>
        <end position="290"/>
    </location>
</feature>
<feature type="sequence conflict" description="In Ref. 2; AAC50615." evidence="14" ref="2">
    <original>V</original>
    <variation>I</variation>
    <location>
        <position position="297"/>
    </location>
</feature>
<feature type="sequence conflict" description="In Ref. 2; AAC50615." evidence="14" ref="2">
    <original>M</original>
    <variation>I</variation>
    <location>
        <position position="302"/>
    </location>
</feature>
<feature type="sequence conflict" description="In Ref. 2; AAC50615." evidence="14" ref="2">
    <location>
        <position position="334"/>
    </location>
</feature>
<feature type="sequence conflict" description="In Ref. 5; AAC01951." evidence="14" ref="5">
    <location>
        <position position="335"/>
    </location>
</feature>
<feature type="sequence conflict" description="In Ref. 2; AAC50615." evidence="14" ref="2">
    <original>S</original>
    <variation>L</variation>
    <location>
        <position position="343"/>
    </location>
</feature>
<feature type="sequence conflict" description="In Ref. 2; AAC50615." evidence="14" ref="2">
    <original>S</original>
    <variation>R</variation>
    <location>
        <position position="371"/>
    </location>
</feature>
<feature type="sequence conflict" description="In Ref. 2; AAC50615." evidence="14" ref="2">
    <original>E</original>
    <variation>K</variation>
    <location>
        <position position="378"/>
    </location>
</feature>
<feature type="sequence conflict" description="In Ref. 2; AAC50615." evidence="14" ref="2">
    <original>D</original>
    <variation>E</variation>
    <location>
        <position position="402"/>
    </location>
</feature>
<feature type="sequence conflict" description="In Ref. 2; AAC50615." evidence="14" ref="2">
    <original>S</original>
    <variation>I</variation>
    <location>
        <position position="405"/>
    </location>
</feature>
<proteinExistence type="evidence at protein level"/>
<keyword id="KW-1003">Cell membrane</keyword>
<keyword id="KW-1015">Disulfide bond</keyword>
<keyword id="KW-0407">Ion channel</keyword>
<keyword id="KW-0406">Ion transport</keyword>
<keyword id="KW-0472">Membrane</keyword>
<keyword id="KW-0479">Metal-binding</keyword>
<keyword id="KW-0630">Potassium</keyword>
<keyword id="KW-0633">Potassium transport</keyword>
<keyword id="KW-1185">Reference proteome</keyword>
<keyword id="KW-0702">S-nitrosylation</keyword>
<keyword id="KW-0812">Transmembrane</keyword>
<keyword id="KW-1133">Transmembrane helix</keyword>
<keyword id="KW-0813">Transport</keyword>
<keyword id="KW-0851">Voltage-gated channel</keyword>
<protein>
    <recommendedName>
        <fullName>ATP-sensitive inward rectifier potassium channel 12</fullName>
    </recommendedName>
    <alternativeName>
        <fullName evidence="13">Inward rectifier K(+) channel Kir2.2</fullName>
        <shortName>IRK-2</shortName>
    </alternativeName>
    <alternativeName>
        <fullName evidence="13">Inward rectifier K(+) channel Kir2.2v</fullName>
    </alternativeName>
    <alternativeName>
        <fullName>Potassium channel, inwardly rectifying subfamily J member 12</fullName>
    </alternativeName>
</protein>
<name>KCJ12_HUMAN</name>
<gene>
    <name type="primary">KCNJ12</name>
    <name type="synonym">IRK2</name>
    <name type="synonym">KCNJN1</name>
</gene>
<organism>
    <name type="scientific">Homo sapiens</name>
    <name type="common">Human</name>
    <dbReference type="NCBI Taxonomy" id="9606"/>
    <lineage>
        <taxon>Eukaryota</taxon>
        <taxon>Metazoa</taxon>
        <taxon>Chordata</taxon>
        <taxon>Craniata</taxon>
        <taxon>Vertebrata</taxon>
        <taxon>Euteleostomi</taxon>
        <taxon>Mammalia</taxon>
        <taxon>Eutheria</taxon>
        <taxon>Euarchontoglires</taxon>
        <taxon>Primates</taxon>
        <taxon>Haplorrhini</taxon>
        <taxon>Catarrhini</taxon>
        <taxon>Hominidae</taxon>
        <taxon>Homo</taxon>
    </lineage>
</organism>
<accession>Q14500</accession>
<accession>O43401</accession>
<accession>Q15756</accession>
<accession>Q8NG63</accession>
<reference key="1">
    <citation type="journal article" date="1995" name="Circ. Res.">
        <title>Cloning and functional expression of an inwardly rectifying K+ channel from human atrium.</title>
        <authorList>
            <person name="Wible B.A."/>
            <person name="de Biasi M."/>
            <person name="Majumder K."/>
            <person name="Taglialatela M."/>
            <person name="Brown A.M."/>
        </authorList>
    </citation>
    <scope>NUCLEOTIDE SEQUENCE [MRNA]</scope>
    <scope>FUNCTION</scope>
    <scope>TRANSPORTER ACTIVITY</scope>
    <scope>ACTIVITY REGULATION</scope>
    <source>
        <tissue>Heart atrium</tissue>
    </source>
</reference>
<reference key="2">
    <citation type="journal article" date="1996" name="FEBS Lett.">
        <title>Kir2.2v: a possible negative regulator of the inwardly rectifying K+ channel Kir2.2.</title>
        <authorList>
            <person name="Namba N."/>
            <person name="Inagaki N."/>
            <person name="Gonoi T."/>
            <person name="Seino Y."/>
            <person name="Seino S."/>
        </authorList>
    </citation>
    <scope>NUCLEOTIDE SEQUENCE [GENOMIC DNA]</scope>
    <scope>FUNCTION</scope>
    <scope>TRANSPORTER ACTIVITY</scope>
    <scope>ACTIVITY REGULATION</scope>
    <scope>VARIANT VAL-100</scope>
</reference>
<reference key="3">
    <citation type="journal article" date="2002" name="FEBS Lett.">
        <title>Identification of human Kir2.2 (KCNJ12) gene encoding functional inward rectifier potassium channel in both mammalian cells and Xenopus oocytes.</title>
        <authorList>
            <person name="Kaibara M."/>
            <person name="Ishihara K."/>
            <person name="Doi Y."/>
            <person name="Hayashi H."/>
            <person name="Ehara T."/>
            <person name="Taniyama K."/>
        </authorList>
    </citation>
    <scope>NUCLEOTIDE SEQUENCE [GENOMIC DNA / MRNA]</scope>
    <scope>FUNCTION</scope>
    <scope>TRANSPORTER ACTIVITY</scope>
</reference>
<reference key="4">
    <citation type="journal article" date="2004" name="Genome Res.">
        <title>The status, quality, and expansion of the NIH full-length cDNA project: the Mammalian Gene Collection (MGC).</title>
        <authorList>
            <consortium name="The MGC Project Team"/>
        </authorList>
    </citation>
    <scope>NUCLEOTIDE SEQUENCE [LARGE SCALE MRNA]</scope>
    <source>
        <tissue>Eye</tissue>
    </source>
</reference>
<reference key="5">
    <citation type="journal article" date="1998" name="J. Biol. Chem.">
        <title>An alternate promoter directs expression of a truncated, muscle-specific isoform of the human ankyrin 1 gene.</title>
        <authorList>
            <person name="Gallagher P.G."/>
            <person name="Forget B.G."/>
        </authorList>
    </citation>
    <scope>NUCLEOTIDE SEQUENCE [MRNA] OF 161-433</scope>
    <source>
        <tissue>Skeletal muscle</tissue>
    </source>
</reference>
<reference key="6">
    <citation type="journal article" date="2002" name="Proc. Natl. Acad. Sci. U.S.A.">
        <title>Heteromerization of Kir2.x potassium channels contributes to the phenotype of Andersen's syndrome.</title>
        <authorList>
            <person name="Preisig-Muller R."/>
            <person name="Schlichthorl G."/>
            <person name="Goerge T."/>
            <person name="Heinen S."/>
            <person name="Bruggemann A."/>
            <person name="Rajan S."/>
            <person name="Derst C."/>
            <person name="Veh R.W."/>
            <person name="Daut J."/>
        </authorList>
    </citation>
    <scope>INTERACTION WITH KCNJ4</scope>
</reference>
<reference key="7">
    <citation type="journal article" date="2010" name="J. Biol. Chem.">
        <title>Direct and specific activation of human inward rectifier K+ channels by membrane phosphatidylinositol 4,5-bisphosphate.</title>
        <authorList>
            <person name="D'Avanzo N."/>
            <person name="Cheng W.W."/>
            <person name="Doyle D.A."/>
            <person name="Nichols C.G."/>
        </authorList>
    </citation>
    <scope>FUNCTION</scope>
    <scope>ACTIVITY REGULATION</scope>
    <scope>SUBUNIT</scope>
</reference>
<reference key="8">
    <citation type="journal article" date="2011" name="J. Biol. Chem.">
        <title>Kir2.6 regulates the surface expression of Kir2.x inward rectifier potassium channels.</title>
        <authorList>
            <person name="Dassau L."/>
            <person name="Conti L.R."/>
            <person name="Radeke C.M."/>
            <person name="Ptacek L.J."/>
            <person name="Vandenberg C.A."/>
        </authorList>
    </citation>
    <scope>SUBCELLULAR LOCATION</scope>
    <scope>INTERACTION WITH KCNJ18</scope>
    <scope>CHARACTERIZATION OF VARIANT LEU-156</scope>
</reference>
<dbReference type="EMBL" id="L36069">
    <property type="protein sequence ID" value="AAA65122.1"/>
    <property type="molecule type" value="mRNA"/>
</dbReference>
<dbReference type="EMBL" id="U53143">
    <property type="protein sequence ID" value="AAC50615.1"/>
    <property type="molecule type" value="Genomic_DNA"/>
</dbReference>
<dbReference type="EMBL" id="AB074970">
    <property type="protein sequence ID" value="BAC02718.1"/>
    <property type="molecule type" value="Genomic_DNA"/>
</dbReference>
<dbReference type="EMBL" id="AB182123">
    <property type="protein sequence ID" value="BAD23901.1"/>
    <property type="molecule type" value="mRNA"/>
</dbReference>
<dbReference type="EMBL" id="BC027982">
    <property type="protein sequence ID" value="AAH27982.1"/>
    <property type="molecule type" value="mRNA"/>
</dbReference>
<dbReference type="EMBL" id="AF005214">
    <property type="protein sequence ID" value="AAC01951.1"/>
    <property type="molecule type" value="mRNA"/>
</dbReference>
<dbReference type="CCDS" id="CCDS11219.1"/>
<dbReference type="PIR" id="I52864">
    <property type="entry name" value="I52864"/>
</dbReference>
<dbReference type="PIR" id="S71341">
    <property type="entry name" value="S71341"/>
</dbReference>
<dbReference type="RefSeq" id="NP_066292.2">
    <property type="nucleotide sequence ID" value="NM_021012.4"/>
</dbReference>
<dbReference type="RefSeq" id="XP_005256682.1">
    <property type="nucleotide sequence ID" value="XM_005256625.6"/>
</dbReference>
<dbReference type="RefSeq" id="XP_011522133.1">
    <property type="nucleotide sequence ID" value="XM_011523831.3"/>
</dbReference>
<dbReference type="RefSeq" id="XP_054171979.1">
    <property type="nucleotide sequence ID" value="XM_054316004.1"/>
</dbReference>
<dbReference type="RefSeq" id="XP_054171980.1">
    <property type="nucleotide sequence ID" value="XM_054316005.1"/>
</dbReference>
<dbReference type="SMR" id="Q14500"/>
<dbReference type="BioGRID" id="109970">
    <property type="interactions" value="28"/>
</dbReference>
<dbReference type="FunCoup" id="Q14500">
    <property type="interactions" value="531"/>
</dbReference>
<dbReference type="IntAct" id="Q14500">
    <property type="interactions" value="6"/>
</dbReference>
<dbReference type="MINT" id="Q14500"/>
<dbReference type="STRING" id="9606.ENSP00000463778"/>
<dbReference type="DrugBank" id="DB11148">
    <property type="generic name" value="Butamben"/>
</dbReference>
<dbReference type="DrugBank" id="DB00204">
    <property type="generic name" value="Dofetilide"/>
</dbReference>
<dbReference type="DrugBank" id="DB04855">
    <property type="generic name" value="Dronedarone"/>
</dbReference>
<dbReference type="DrugBank" id="DB01110">
    <property type="generic name" value="Miconazole"/>
</dbReference>
<dbReference type="DrugBank" id="DB00243">
    <property type="generic name" value="Ranolazine"/>
</dbReference>
<dbReference type="DrugBank" id="DB00867">
    <property type="generic name" value="Ritodrine"/>
</dbReference>
<dbReference type="DrugBank" id="DB01392">
    <property type="generic name" value="Yohimbine"/>
</dbReference>
<dbReference type="GuidetoPHARMACOLOGY" id="431"/>
<dbReference type="TCDB" id="1.A.2.1.9">
    <property type="family name" value="the inward rectifier k(+) channel (irk-c) family"/>
</dbReference>
<dbReference type="iPTMnet" id="Q14500"/>
<dbReference type="PhosphoSitePlus" id="Q14500"/>
<dbReference type="BioMuta" id="KCNJ12"/>
<dbReference type="DMDM" id="77416868"/>
<dbReference type="jPOST" id="Q14500"/>
<dbReference type="MassIVE" id="Q14500"/>
<dbReference type="PaxDb" id="9606-ENSP00000463778"/>
<dbReference type="PeptideAtlas" id="Q14500"/>
<dbReference type="ProteomicsDB" id="60008"/>
<dbReference type="Antibodypedia" id="26154">
    <property type="antibodies" value="212 antibodies from 27 providers"/>
</dbReference>
<dbReference type="DNASU" id="3768"/>
<dbReference type="Ensembl" id="ENST00000331718.5">
    <property type="protein sequence ID" value="ENSP00000328150.5"/>
    <property type="gene ID" value="ENSG00000184185.10"/>
</dbReference>
<dbReference type="Ensembl" id="ENST00000583088.6">
    <property type="protein sequence ID" value="ENSP00000463778.1"/>
    <property type="gene ID" value="ENSG00000184185.10"/>
</dbReference>
<dbReference type="GeneID" id="3768"/>
<dbReference type="KEGG" id="hsa:3768"/>
<dbReference type="MANE-Select" id="ENST00000583088.6">
    <property type="protein sequence ID" value="ENSP00000463778.1"/>
    <property type="RefSeq nucleotide sequence ID" value="NM_021012.5"/>
    <property type="RefSeq protein sequence ID" value="NP_066292.2"/>
</dbReference>
<dbReference type="UCSC" id="uc002gyv.2">
    <property type="organism name" value="human"/>
</dbReference>
<dbReference type="AGR" id="HGNC:6258"/>
<dbReference type="CTD" id="3768"/>
<dbReference type="DisGeNET" id="3768"/>
<dbReference type="GeneCards" id="KCNJ12"/>
<dbReference type="HGNC" id="HGNC:6258">
    <property type="gene designation" value="KCNJ12"/>
</dbReference>
<dbReference type="HPA" id="ENSG00000184185">
    <property type="expression patterns" value="Group enriched (brain, skeletal muscle, tongue)"/>
</dbReference>
<dbReference type="MalaCards" id="KCNJ12"/>
<dbReference type="MIM" id="602323">
    <property type="type" value="gene"/>
</dbReference>
<dbReference type="neXtProt" id="NX_Q14500"/>
<dbReference type="OpenTargets" id="ENSG00000184185"/>
<dbReference type="PharmGKB" id="PA218"/>
<dbReference type="VEuPathDB" id="HostDB:ENSG00000184185"/>
<dbReference type="eggNOG" id="KOG3827">
    <property type="taxonomic scope" value="Eukaryota"/>
</dbReference>
<dbReference type="GeneTree" id="ENSGT01030000234586"/>
<dbReference type="HOGENOM" id="CLU_022738_3_0_1"/>
<dbReference type="InParanoid" id="Q14500"/>
<dbReference type="OMA" id="TMHGMNG"/>
<dbReference type="OrthoDB" id="273257at2759"/>
<dbReference type="PAN-GO" id="Q14500">
    <property type="GO annotations" value="4 GO annotations based on evolutionary models"/>
</dbReference>
<dbReference type="PhylomeDB" id="Q14500"/>
<dbReference type="TreeFam" id="TF313676"/>
<dbReference type="PathwayCommons" id="Q14500"/>
<dbReference type="Reactome" id="R-HSA-1296041">
    <property type="pathway name" value="Activation of G protein gated Potassium channels"/>
</dbReference>
<dbReference type="Reactome" id="R-HSA-1296053">
    <property type="pathway name" value="Classical Kir channels"/>
</dbReference>
<dbReference type="Reactome" id="R-HSA-5576886">
    <property type="pathway name" value="Phase 4 - resting membrane potential"/>
</dbReference>
<dbReference type="Reactome" id="R-HSA-997272">
    <property type="pathway name" value="Inhibition of voltage gated Ca2+ channels via Gbeta/gamma subunits"/>
</dbReference>
<dbReference type="SignaLink" id="Q14500"/>
<dbReference type="SIGNOR" id="Q14500"/>
<dbReference type="BioGRID-ORCS" id="3768">
    <property type="hits" value="38 hits in 1146 CRISPR screens"/>
</dbReference>
<dbReference type="ChiTaRS" id="KCNJ12">
    <property type="organism name" value="human"/>
</dbReference>
<dbReference type="GeneWiki" id="KCNJ12"/>
<dbReference type="GenomeRNAi" id="3768"/>
<dbReference type="Pharos" id="Q14500">
    <property type="development level" value="Tchem"/>
</dbReference>
<dbReference type="PRO" id="PR:Q14500"/>
<dbReference type="Proteomes" id="UP000005640">
    <property type="component" value="Chromosome 17"/>
</dbReference>
<dbReference type="RNAct" id="Q14500">
    <property type="molecule type" value="protein"/>
</dbReference>
<dbReference type="Bgee" id="ENSG00000184185">
    <property type="expression patterns" value="Expressed in skeletal muscle tissue of rectus abdominis and 116 other cell types or tissues"/>
</dbReference>
<dbReference type="GO" id="GO:0016020">
    <property type="term" value="C:membrane"/>
    <property type="evidence" value="ECO:0000314"/>
    <property type="project" value="UniProtKB"/>
</dbReference>
<dbReference type="GO" id="GO:0034702">
    <property type="term" value="C:monoatomic ion channel complex"/>
    <property type="evidence" value="ECO:0007669"/>
    <property type="project" value="UniProtKB-KW"/>
</dbReference>
<dbReference type="GO" id="GO:0005886">
    <property type="term" value="C:plasma membrane"/>
    <property type="evidence" value="ECO:0000318"/>
    <property type="project" value="GO_Central"/>
</dbReference>
<dbReference type="GO" id="GO:0030315">
    <property type="term" value="C:T-tubule"/>
    <property type="evidence" value="ECO:0000250"/>
    <property type="project" value="UniProtKB"/>
</dbReference>
<dbReference type="GO" id="GO:0005242">
    <property type="term" value="F:inward rectifier potassium channel activity"/>
    <property type="evidence" value="ECO:0000314"/>
    <property type="project" value="UniProtKB"/>
</dbReference>
<dbReference type="GO" id="GO:0046872">
    <property type="term" value="F:metal ion binding"/>
    <property type="evidence" value="ECO:0007669"/>
    <property type="project" value="UniProtKB-KW"/>
</dbReference>
<dbReference type="GO" id="GO:0006936">
    <property type="term" value="P:muscle contraction"/>
    <property type="evidence" value="ECO:0000304"/>
    <property type="project" value="ProtInc"/>
</dbReference>
<dbReference type="GO" id="GO:1990573">
    <property type="term" value="P:potassium ion import across plasma membrane"/>
    <property type="evidence" value="ECO:0000318"/>
    <property type="project" value="GO_Central"/>
</dbReference>
<dbReference type="GO" id="GO:0006813">
    <property type="term" value="P:potassium ion transport"/>
    <property type="evidence" value="ECO:0000314"/>
    <property type="project" value="UniProtKB"/>
</dbReference>
<dbReference type="GO" id="GO:0051289">
    <property type="term" value="P:protein homotetramerization"/>
    <property type="evidence" value="ECO:0000314"/>
    <property type="project" value="UniProtKB"/>
</dbReference>
<dbReference type="GO" id="GO:0008016">
    <property type="term" value="P:regulation of heart contraction"/>
    <property type="evidence" value="ECO:0000304"/>
    <property type="project" value="ProtInc"/>
</dbReference>
<dbReference type="GO" id="GO:0034765">
    <property type="term" value="P:regulation of monoatomic ion transmembrane transport"/>
    <property type="evidence" value="ECO:0000318"/>
    <property type="project" value="GO_Central"/>
</dbReference>
<dbReference type="FunFam" id="1.10.287.70:FF:000039">
    <property type="entry name" value="ATP-sensitive inward rectifier potassium channel 12"/>
    <property type="match status" value="1"/>
</dbReference>
<dbReference type="FunFam" id="2.60.40.1400:FF:000001">
    <property type="entry name" value="G protein-activated inward rectifier potassium channel 2"/>
    <property type="match status" value="1"/>
</dbReference>
<dbReference type="Gene3D" id="1.10.287.70">
    <property type="match status" value="1"/>
</dbReference>
<dbReference type="Gene3D" id="2.60.40.1400">
    <property type="entry name" value="G protein-activated inward rectifier potassium channel 1"/>
    <property type="match status" value="1"/>
</dbReference>
<dbReference type="InterPro" id="IPR014756">
    <property type="entry name" value="Ig_E-set"/>
</dbReference>
<dbReference type="InterPro" id="IPR041647">
    <property type="entry name" value="IRK_C"/>
</dbReference>
<dbReference type="InterPro" id="IPR016449">
    <property type="entry name" value="K_chnl_inward-rec_Kir"/>
</dbReference>
<dbReference type="InterPro" id="IPR003272">
    <property type="entry name" value="K_chnl_inward-rec_Kir2.2"/>
</dbReference>
<dbReference type="InterPro" id="IPR013518">
    <property type="entry name" value="K_chnl_inward-rec_Kir_cyto"/>
</dbReference>
<dbReference type="InterPro" id="IPR013673">
    <property type="entry name" value="K_chnl_inward-rec_Kir_N"/>
</dbReference>
<dbReference type="InterPro" id="IPR040445">
    <property type="entry name" value="Kir_TM"/>
</dbReference>
<dbReference type="PANTHER" id="PTHR11767:SF14">
    <property type="entry name" value="ATP-SENSITIVE INWARD RECTIFIER POTASSIUM CHANNEL 12-RELATED"/>
    <property type="match status" value="1"/>
</dbReference>
<dbReference type="PANTHER" id="PTHR11767">
    <property type="entry name" value="INWARD RECTIFIER POTASSIUM CHANNEL"/>
    <property type="match status" value="1"/>
</dbReference>
<dbReference type="Pfam" id="PF01007">
    <property type="entry name" value="IRK"/>
    <property type="match status" value="1"/>
</dbReference>
<dbReference type="Pfam" id="PF17655">
    <property type="entry name" value="IRK_C"/>
    <property type="match status" value="1"/>
</dbReference>
<dbReference type="Pfam" id="PF08466">
    <property type="entry name" value="IRK_N"/>
    <property type="match status" value="1"/>
</dbReference>
<dbReference type="PRINTS" id="PR01325">
    <property type="entry name" value="KIR22CHANNEL"/>
</dbReference>
<dbReference type="PRINTS" id="PR01320">
    <property type="entry name" value="KIRCHANNEL"/>
</dbReference>
<dbReference type="SUPFAM" id="SSF81296">
    <property type="entry name" value="E set domains"/>
    <property type="match status" value="1"/>
</dbReference>
<dbReference type="SUPFAM" id="SSF81324">
    <property type="entry name" value="Voltage-gated potassium channels"/>
    <property type="match status" value="1"/>
</dbReference>
<comment type="function">
    <text evidence="8 9 11 12">Inward rectifying potassium channel that probably participates in controlling the resting membrane potential in electrically excitable cells. Probably participates in establishing action potential waveform and excitability of neuronal and muscle tissues. Inward rectifier potassium channels are characterized by a greater tendency to allow potassium to flow into the cell rather than out of it. Their voltage dependence is regulated by the concentration of extracellular potassium; as external potassium is raised, the voltage range of the channel opening shifts to more positive voltages. The inward rectification is mainly due to the blockage of outward current by internal magnesium.</text>
</comment>
<comment type="catalytic activity">
    <reaction evidence="8 11 12">
        <text>K(+)(in) = K(+)(out)</text>
        <dbReference type="Rhea" id="RHEA:29463"/>
        <dbReference type="ChEBI" id="CHEBI:29103"/>
    </reaction>
</comment>
<comment type="activity regulation">
    <text evidence="2 9 11 12">Activated by phosphatidylinositol 4,5-biphosphate (PtdIns(4,5)P2) (PubMed:20921230). PtdIns(4,5)P2 binding to the cytoplasmic side of the channel triggers a conformation change leading to channel opening (By similarity). Inhibited by Ba(2+) (PubMed:7859381, PubMed:8647284).</text>
</comment>
<comment type="subunit">
    <text evidence="3 7 10">Homotetramer (PubMed:20921230). Forms heteromer with KCNJ4 (PubMed:12032359). Can form heteromeric channels with Kir2.6/KCNJ18 (PubMed:21209095). Association, via its PDZ-recognition domain, with LIN7A, LIN7B, LIN7C, DLG1, CASK and APBA1 plays a key role in its localization and trafficking (By similarity).</text>
</comment>
<comment type="interaction">
    <interactant intactId="EBI-11794596">
        <id>Q14500</id>
    </interactant>
    <interactant intactId="EBI-489887">
        <id>P50402</id>
        <label>EMD</label>
    </interactant>
    <organismsDiffer>false</organismsDiffer>
    <experiments>3</experiments>
</comment>
<comment type="interaction">
    <interactant intactId="EBI-11794596">
        <id>Q14500</id>
    </interactant>
    <interactant intactId="EBI-357345">
        <id>Q14160</id>
        <label>SCRIB</label>
    </interactant>
    <organismsDiffer>false</organismsDiffer>
    <experiments>2</experiments>
</comment>
<comment type="subcellular location">
    <subcellularLocation>
        <location evidence="5">Membrane</location>
        <topology evidence="5">Multi-pass membrane protein</topology>
    </subcellularLocation>
    <subcellularLocation>
        <location evidence="10">Cell membrane</location>
    </subcellularLocation>
    <subcellularLocation>
        <location evidence="3">Cell membrane</location>
        <location evidence="3">Sarcolemma</location>
        <location evidence="3">T-tubule</location>
    </subcellularLocation>
</comment>
<comment type="similarity">
    <text evidence="14">Belongs to the inward rectifier-type potassium channel (TC 1.A.2.1) family. KCNJ12 subfamily.</text>
</comment>
<evidence type="ECO:0000250" key="1"/>
<evidence type="ECO:0000250" key="2">
    <source>
        <dbReference type="UniProtKB" id="F1NHE9"/>
    </source>
</evidence>
<evidence type="ECO:0000250" key="3">
    <source>
        <dbReference type="UniProtKB" id="P52188"/>
    </source>
</evidence>
<evidence type="ECO:0000250" key="4">
    <source>
        <dbReference type="UniProtKB" id="P63252"/>
    </source>
</evidence>
<evidence type="ECO:0000255" key="5"/>
<evidence type="ECO:0000256" key="6">
    <source>
        <dbReference type="SAM" id="MobiDB-lite"/>
    </source>
</evidence>
<evidence type="ECO:0000269" key="7">
    <source>
    </source>
</evidence>
<evidence type="ECO:0000269" key="8">
    <source>
    </source>
</evidence>
<evidence type="ECO:0000269" key="9">
    <source>
    </source>
</evidence>
<evidence type="ECO:0000269" key="10">
    <source>
    </source>
</evidence>
<evidence type="ECO:0000269" key="11">
    <source>
    </source>
</evidence>
<evidence type="ECO:0000269" key="12">
    <source>
    </source>
</evidence>
<evidence type="ECO:0000303" key="13">
    <source>
    </source>
</evidence>
<evidence type="ECO:0000305" key="14"/>
<sequence>MTAASRANPYSIVSSEEDGLHLVTMSGANGFGNGKVHTRRRCRNRFVKKNGQCNIEFANMDEKSQRYLADMFTTCVDIRWRYMLLIFSLAFLASWLLFGIIFWVIAVAHGDLEPAEGRGRTPCVMQVHGFMAAFLFSIETQTTIGYGLRCVTEECPVAVFMVVAQSIVGCIIDSFMIGAIMAKMARPKKRAQTLLFSHNAVVALRDGKLCLMWRVGNLRKSHIVEAHVRAQLIKPRVTEEGEYIPLDQIDIDVGFDKGLDRIFLVSPITILHEIDEASPLFGISRQDLETDDFEIVVILEGMVEATAMTTQARSSYLANEILWGHRFEPVLFEEKNQYKIDYSHFHKTYEVPSTPRCSAKDLVENKFLLPSANSFCYENELAFLSRDEEDEADGDQDGRSRDGLSPQARHDFDRLQAGGGVLEQRPYRRESEI</sequence>